<gene>
    <name evidence="1" type="primary">rimM</name>
    <name type="ordered locus">BCA_3942</name>
</gene>
<evidence type="ECO:0000255" key="1">
    <source>
        <dbReference type="HAMAP-Rule" id="MF_00014"/>
    </source>
</evidence>
<dbReference type="EMBL" id="CP001407">
    <property type="protein sequence ID" value="ACO30794.1"/>
    <property type="molecule type" value="Genomic_DNA"/>
</dbReference>
<dbReference type="RefSeq" id="WP_000170268.1">
    <property type="nucleotide sequence ID" value="NZ_CP009318.1"/>
</dbReference>
<dbReference type="SMR" id="C1EP66"/>
<dbReference type="GeneID" id="93007270"/>
<dbReference type="KEGG" id="bcx:BCA_3942"/>
<dbReference type="PATRIC" id="fig|572264.18.peg.3898"/>
<dbReference type="Proteomes" id="UP000002210">
    <property type="component" value="Chromosome"/>
</dbReference>
<dbReference type="GO" id="GO:0005737">
    <property type="term" value="C:cytoplasm"/>
    <property type="evidence" value="ECO:0007669"/>
    <property type="project" value="UniProtKB-SubCell"/>
</dbReference>
<dbReference type="GO" id="GO:0005840">
    <property type="term" value="C:ribosome"/>
    <property type="evidence" value="ECO:0007669"/>
    <property type="project" value="InterPro"/>
</dbReference>
<dbReference type="GO" id="GO:0043022">
    <property type="term" value="F:ribosome binding"/>
    <property type="evidence" value="ECO:0007669"/>
    <property type="project" value="InterPro"/>
</dbReference>
<dbReference type="GO" id="GO:0042274">
    <property type="term" value="P:ribosomal small subunit biogenesis"/>
    <property type="evidence" value="ECO:0007669"/>
    <property type="project" value="UniProtKB-UniRule"/>
</dbReference>
<dbReference type="GO" id="GO:0006364">
    <property type="term" value="P:rRNA processing"/>
    <property type="evidence" value="ECO:0007669"/>
    <property type="project" value="UniProtKB-UniRule"/>
</dbReference>
<dbReference type="Gene3D" id="2.30.30.240">
    <property type="entry name" value="PRC-barrel domain"/>
    <property type="match status" value="1"/>
</dbReference>
<dbReference type="Gene3D" id="2.40.30.60">
    <property type="entry name" value="RimM"/>
    <property type="match status" value="1"/>
</dbReference>
<dbReference type="HAMAP" id="MF_00014">
    <property type="entry name" value="Ribosome_mat_RimM"/>
    <property type="match status" value="1"/>
</dbReference>
<dbReference type="InterPro" id="IPR027275">
    <property type="entry name" value="PRC-brl_dom"/>
</dbReference>
<dbReference type="InterPro" id="IPR011033">
    <property type="entry name" value="PRC_barrel-like_sf"/>
</dbReference>
<dbReference type="InterPro" id="IPR011961">
    <property type="entry name" value="RimM"/>
</dbReference>
<dbReference type="InterPro" id="IPR002676">
    <property type="entry name" value="RimM_N"/>
</dbReference>
<dbReference type="InterPro" id="IPR036976">
    <property type="entry name" value="RimM_N_sf"/>
</dbReference>
<dbReference type="InterPro" id="IPR009000">
    <property type="entry name" value="Transl_B-barrel_sf"/>
</dbReference>
<dbReference type="NCBIfam" id="TIGR02273">
    <property type="entry name" value="16S_RimM"/>
    <property type="match status" value="1"/>
</dbReference>
<dbReference type="PANTHER" id="PTHR33692">
    <property type="entry name" value="RIBOSOME MATURATION FACTOR RIMM"/>
    <property type="match status" value="1"/>
</dbReference>
<dbReference type="PANTHER" id="PTHR33692:SF1">
    <property type="entry name" value="RIBOSOME MATURATION FACTOR RIMM"/>
    <property type="match status" value="1"/>
</dbReference>
<dbReference type="Pfam" id="PF05239">
    <property type="entry name" value="PRC"/>
    <property type="match status" value="1"/>
</dbReference>
<dbReference type="Pfam" id="PF01782">
    <property type="entry name" value="RimM"/>
    <property type="match status" value="1"/>
</dbReference>
<dbReference type="SUPFAM" id="SSF50346">
    <property type="entry name" value="PRC-barrel domain"/>
    <property type="match status" value="1"/>
</dbReference>
<dbReference type="SUPFAM" id="SSF50447">
    <property type="entry name" value="Translation proteins"/>
    <property type="match status" value="1"/>
</dbReference>
<proteinExistence type="inferred from homology"/>
<keyword id="KW-0143">Chaperone</keyword>
<keyword id="KW-0963">Cytoplasm</keyword>
<keyword id="KW-0690">Ribosome biogenesis</keyword>
<keyword id="KW-0698">rRNA processing</keyword>
<reference key="1">
    <citation type="submission" date="2009-02" db="EMBL/GenBank/DDBJ databases">
        <title>Genome sequence of Bacillus cereus 03BB102.</title>
        <authorList>
            <person name="Dodson R.J."/>
            <person name="Jackson P."/>
            <person name="Munk A.C."/>
            <person name="Brettin T."/>
            <person name="Bruce D."/>
            <person name="Detter C."/>
            <person name="Tapia R."/>
            <person name="Han C."/>
            <person name="Sutton G."/>
            <person name="Sims D."/>
        </authorList>
    </citation>
    <scope>NUCLEOTIDE SEQUENCE [LARGE SCALE GENOMIC DNA]</scope>
    <source>
        <strain>03BB102</strain>
    </source>
</reference>
<name>RIMM_BACC3</name>
<feature type="chain" id="PRO_1000116561" description="Ribosome maturation factor RimM">
    <location>
        <begin position="1"/>
        <end position="171"/>
    </location>
</feature>
<feature type="domain" description="PRC barrel" evidence="1">
    <location>
        <begin position="96"/>
        <end position="170"/>
    </location>
</feature>
<comment type="function">
    <text evidence="1">An accessory protein needed during the final step in the assembly of 30S ribosomal subunit, possibly for assembly of the head region. Essential for efficient processing of 16S rRNA. May be needed both before and after RbfA during the maturation of 16S rRNA. It has affinity for free ribosomal 30S subunits but not for 70S ribosomes.</text>
</comment>
<comment type="subunit">
    <text evidence="1">Binds ribosomal protein uS19.</text>
</comment>
<comment type="subcellular location">
    <subcellularLocation>
        <location evidence="1">Cytoplasm</location>
    </subcellularLocation>
</comment>
<comment type="domain">
    <text evidence="1">The PRC barrel domain binds ribosomal protein uS19.</text>
</comment>
<comment type="similarity">
    <text evidence="1">Belongs to the RimM family.</text>
</comment>
<accession>C1EP66</accession>
<organism>
    <name type="scientific">Bacillus cereus (strain 03BB102)</name>
    <dbReference type="NCBI Taxonomy" id="572264"/>
    <lineage>
        <taxon>Bacteria</taxon>
        <taxon>Bacillati</taxon>
        <taxon>Bacillota</taxon>
        <taxon>Bacilli</taxon>
        <taxon>Bacillales</taxon>
        <taxon>Bacillaceae</taxon>
        <taxon>Bacillus</taxon>
        <taxon>Bacillus cereus group</taxon>
    </lineage>
</organism>
<protein>
    <recommendedName>
        <fullName evidence="1">Ribosome maturation factor RimM</fullName>
    </recommendedName>
</protein>
<sequence>MTKWFNVGKIVNTHGVKGEIRVVSRTDFPEERYKVGNTLYISNEKGGEPFPVKITSHRQHKTFDLLTFEGYGNVNEVEQFKGSLLKVPEDQLGELAEGEYYYHEIIGCNVVTEEGEALGTIKEVLSPGANDVWVIKRPKGQDLLIPYIDDVVLQVNIENKLVTIHVMEGLL</sequence>